<evidence type="ECO:0000250" key="1"/>
<evidence type="ECO:0000255" key="2">
    <source>
        <dbReference type="HAMAP-Rule" id="MF_00100"/>
    </source>
</evidence>
<evidence type="ECO:0000256" key="3">
    <source>
        <dbReference type="SAM" id="MobiDB-lite"/>
    </source>
</evidence>
<accession>B0BB83</accession>
<proteinExistence type="inferred from homology"/>
<dbReference type="EMBL" id="AM884177">
    <property type="protein sequence ID" value="CAP06745.1"/>
    <property type="molecule type" value="Genomic_DNA"/>
</dbReference>
<dbReference type="RefSeq" id="WP_009873552.1">
    <property type="nucleotide sequence ID" value="NC_010280.2"/>
</dbReference>
<dbReference type="SMR" id="B0BB83"/>
<dbReference type="KEGG" id="ctl:CTLon_0347"/>
<dbReference type="HOGENOM" id="CLU_006301_3_1_0"/>
<dbReference type="Proteomes" id="UP001154401">
    <property type="component" value="Chromosome"/>
</dbReference>
<dbReference type="GO" id="GO:0005829">
    <property type="term" value="C:cytosol"/>
    <property type="evidence" value="ECO:0007669"/>
    <property type="project" value="TreeGrafter"/>
</dbReference>
<dbReference type="GO" id="GO:0005525">
    <property type="term" value="F:GTP binding"/>
    <property type="evidence" value="ECO:0007669"/>
    <property type="project" value="UniProtKB-KW"/>
</dbReference>
<dbReference type="GO" id="GO:0003924">
    <property type="term" value="F:GTPase activity"/>
    <property type="evidence" value="ECO:0007669"/>
    <property type="project" value="UniProtKB-UniRule"/>
</dbReference>
<dbReference type="GO" id="GO:0003743">
    <property type="term" value="F:translation initiation factor activity"/>
    <property type="evidence" value="ECO:0007669"/>
    <property type="project" value="UniProtKB-UniRule"/>
</dbReference>
<dbReference type="CDD" id="cd01887">
    <property type="entry name" value="IF2_eIF5B"/>
    <property type="match status" value="1"/>
</dbReference>
<dbReference type="CDD" id="cd03702">
    <property type="entry name" value="IF2_mtIF2_II"/>
    <property type="match status" value="1"/>
</dbReference>
<dbReference type="CDD" id="cd03692">
    <property type="entry name" value="mtIF2_IVc"/>
    <property type="match status" value="1"/>
</dbReference>
<dbReference type="FunFam" id="2.40.30.10:FF:000008">
    <property type="entry name" value="Translation initiation factor IF-2"/>
    <property type="match status" value="1"/>
</dbReference>
<dbReference type="FunFam" id="2.40.30.10:FF:000054">
    <property type="entry name" value="Translation initiation factor IF-2"/>
    <property type="match status" value="1"/>
</dbReference>
<dbReference type="FunFam" id="3.40.50.10050:FF:000001">
    <property type="entry name" value="Translation initiation factor IF-2"/>
    <property type="match status" value="1"/>
</dbReference>
<dbReference type="FunFam" id="3.40.50.300:FF:000019">
    <property type="entry name" value="Translation initiation factor IF-2"/>
    <property type="match status" value="1"/>
</dbReference>
<dbReference type="Gene3D" id="3.40.50.300">
    <property type="entry name" value="P-loop containing nucleotide triphosphate hydrolases"/>
    <property type="match status" value="1"/>
</dbReference>
<dbReference type="Gene3D" id="2.40.30.10">
    <property type="entry name" value="Translation factors"/>
    <property type="match status" value="2"/>
</dbReference>
<dbReference type="Gene3D" id="3.40.50.10050">
    <property type="entry name" value="Translation initiation factor IF- 2, domain 3"/>
    <property type="match status" value="1"/>
</dbReference>
<dbReference type="HAMAP" id="MF_00100_B">
    <property type="entry name" value="IF_2_B"/>
    <property type="match status" value="1"/>
</dbReference>
<dbReference type="InterPro" id="IPR053905">
    <property type="entry name" value="EF-G-like_DII"/>
</dbReference>
<dbReference type="InterPro" id="IPR004161">
    <property type="entry name" value="EFTu-like_2"/>
</dbReference>
<dbReference type="InterPro" id="IPR044145">
    <property type="entry name" value="IF2_II"/>
</dbReference>
<dbReference type="InterPro" id="IPR006847">
    <property type="entry name" value="IF2_N"/>
</dbReference>
<dbReference type="InterPro" id="IPR027417">
    <property type="entry name" value="P-loop_NTPase"/>
</dbReference>
<dbReference type="InterPro" id="IPR005225">
    <property type="entry name" value="Small_GTP-bd"/>
</dbReference>
<dbReference type="InterPro" id="IPR000795">
    <property type="entry name" value="T_Tr_GTP-bd_dom"/>
</dbReference>
<dbReference type="InterPro" id="IPR000178">
    <property type="entry name" value="TF_IF2_bacterial-like"/>
</dbReference>
<dbReference type="InterPro" id="IPR015760">
    <property type="entry name" value="TIF_IF2"/>
</dbReference>
<dbReference type="InterPro" id="IPR023115">
    <property type="entry name" value="TIF_IF2_dom3"/>
</dbReference>
<dbReference type="InterPro" id="IPR036925">
    <property type="entry name" value="TIF_IF2_dom3_sf"/>
</dbReference>
<dbReference type="InterPro" id="IPR009000">
    <property type="entry name" value="Transl_B-barrel_sf"/>
</dbReference>
<dbReference type="NCBIfam" id="TIGR00487">
    <property type="entry name" value="IF-2"/>
    <property type="match status" value="1"/>
</dbReference>
<dbReference type="NCBIfam" id="TIGR00231">
    <property type="entry name" value="small_GTP"/>
    <property type="match status" value="1"/>
</dbReference>
<dbReference type="PANTHER" id="PTHR43381:SF5">
    <property type="entry name" value="TR-TYPE G DOMAIN-CONTAINING PROTEIN"/>
    <property type="match status" value="1"/>
</dbReference>
<dbReference type="PANTHER" id="PTHR43381">
    <property type="entry name" value="TRANSLATION INITIATION FACTOR IF-2-RELATED"/>
    <property type="match status" value="1"/>
</dbReference>
<dbReference type="Pfam" id="PF22042">
    <property type="entry name" value="EF-G_D2"/>
    <property type="match status" value="1"/>
</dbReference>
<dbReference type="Pfam" id="PF00009">
    <property type="entry name" value="GTP_EFTU"/>
    <property type="match status" value="1"/>
</dbReference>
<dbReference type="Pfam" id="PF03144">
    <property type="entry name" value="GTP_EFTU_D2"/>
    <property type="match status" value="1"/>
</dbReference>
<dbReference type="Pfam" id="PF11987">
    <property type="entry name" value="IF-2"/>
    <property type="match status" value="1"/>
</dbReference>
<dbReference type="Pfam" id="PF04760">
    <property type="entry name" value="IF2_N"/>
    <property type="match status" value="1"/>
</dbReference>
<dbReference type="SUPFAM" id="SSF52156">
    <property type="entry name" value="Initiation factor IF2/eIF5b, domain 3"/>
    <property type="match status" value="1"/>
</dbReference>
<dbReference type="SUPFAM" id="SSF52540">
    <property type="entry name" value="P-loop containing nucleoside triphosphate hydrolases"/>
    <property type="match status" value="1"/>
</dbReference>
<dbReference type="SUPFAM" id="SSF50447">
    <property type="entry name" value="Translation proteins"/>
    <property type="match status" value="2"/>
</dbReference>
<dbReference type="PROSITE" id="PS51722">
    <property type="entry name" value="G_TR_2"/>
    <property type="match status" value="1"/>
</dbReference>
<dbReference type="PROSITE" id="PS01176">
    <property type="entry name" value="IF2"/>
    <property type="match status" value="1"/>
</dbReference>
<name>IF2_CHLTB</name>
<protein>
    <recommendedName>
        <fullName evidence="2">Translation initiation factor IF-2</fullName>
    </recommendedName>
</protein>
<gene>
    <name evidence="2" type="primary">infB</name>
    <name type="ordered locus">CTLon_0347</name>
</gene>
<keyword id="KW-0963">Cytoplasm</keyword>
<keyword id="KW-0342">GTP-binding</keyword>
<keyword id="KW-0396">Initiation factor</keyword>
<keyword id="KW-0547">Nucleotide-binding</keyword>
<keyword id="KW-0648">Protein biosynthesis</keyword>
<organism>
    <name type="scientific">Chlamydia trachomatis serovar L2b (strain UCH-1/proctitis)</name>
    <dbReference type="NCBI Taxonomy" id="471473"/>
    <lineage>
        <taxon>Bacteria</taxon>
        <taxon>Pseudomonadati</taxon>
        <taxon>Chlamydiota</taxon>
        <taxon>Chlamydiia</taxon>
        <taxon>Chlamydiales</taxon>
        <taxon>Chlamydiaceae</taxon>
        <taxon>Chlamydia/Chlamydophila group</taxon>
        <taxon>Chlamydia</taxon>
    </lineage>
</organism>
<reference key="1">
    <citation type="journal article" date="2008" name="Genome Res.">
        <title>Chlamydia trachomatis: genome sequence analysis of lymphogranuloma venereum isolates.</title>
        <authorList>
            <person name="Thomson N.R."/>
            <person name="Holden M.T.G."/>
            <person name="Carder C."/>
            <person name="Lennard N."/>
            <person name="Lockey S.J."/>
            <person name="Marsh P."/>
            <person name="Skipp P."/>
            <person name="O'Connor C.D."/>
            <person name="Goodhead I."/>
            <person name="Norbertzcak H."/>
            <person name="Harris B."/>
            <person name="Ormond D."/>
            <person name="Rance R."/>
            <person name="Quail M.A."/>
            <person name="Parkhill J."/>
            <person name="Stephens R.S."/>
            <person name="Clarke I.N."/>
        </authorList>
    </citation>
    <scope>NUCLEOTIDE SEQUENCE [LARGE SCALE GENOMIC DNA]</scope>
    <source>
        <strain>UCH-1/proctitis</strain>
    </source>
</reference>
<comment type="function">
    <text evidence="2">One of the essential components for the initiation of protein synthesis. Protects formylmethionyl-tRNA from spontaneous hydrolysis and promotes its binding to the 30S ribosomal subunits. Also involved in the hydrolysis of GTP during the formation of the 70S ribosomal complex.</text>
</comment>
<comment type="subcellular location">
    <subcellularLocation>
        <location evidence="2">Cytoplasm</location>
    </subcellularLocation>
</comment>
<comment type="similarity">
    <text evidence="2">Belongs to the TRAFAC class translation factor GTPase superfamily. Classic translation factor GTPase family. IF-2 subfamily.</text>
</comment>
<sequence>MEKAKLTKNLKLKIKNAQLTKAAGLDKLKQKLAQAGSSDTKNSPASKAQTKEKSSKKTAGTPAPAPEVDLGATESTARRIRAKDRSSFAAEPTVTTALPGDASHLTLDAIPAIKAPEITSVTQKEQTLRECTDTSSVQQEEKKESSEETSPETPERIEETPIIRTRTEPKSVVSIKPKFGPTGKHINHLLAKTFKAPAKETKAASTEETTQQQPRQNDAASHNNKQQPSGTSSRPASSAPSYRRESTSNNNNNAKRGSERDRSKRSDESVKAFTGRDRYGLNEGSSEEDKWRKKRVHKTKKQAEEHVVQCPAHIKIALPITVKDLAAEMKLKASELIQKLFIHGMTYVVNDVLDSQTVVEYIGLEFGCTIEIDSSAKEKLCLVENTVRDEVNATDPEKLIIRSPIVAFMGHVDHGKTTIIDALRQSNMAASEAGAITQHTGAFKCTTPVGEITVLDTPGHEAFSAMRARGAEVCDIVVLVVAGDEGIKEQTIEAIEHAKGANITIVVAINKCDKPNFNVETVYRQLAELDLLPEAWGGSIATINTSAKTGEGLQDLLEMLALQAEVLELKADPSARARGLVIESELHKGLGAVATVLVQNGTLHLGEALVFNDCYGKVKTMHDEHNQLLQSATPSTPVLITGLSAIPKAGDPFIVVKNEKVAKEIISARLAGQQRSAALQKKRPNFDAVLQNKKTLKLIIKADVQGSIEALAHSILNIRSEKVDVEILSSGVGDISESDIRLASASKATVIGFHTSVESHAEPLIKNLNVKVCLFDIIYHAVDAIKEIMTGLLDPIAEEKNLGAAEIKATFKSSQLGTIYGCLVTEGTVVRNQKIRIIRDKEVLWKGSLSSLKRLKEDVKEVKKGMECGILLDNYQQAQVGDILQCYEVIYHPQTL</sequence>
<feature type="chain" id="PRO_1000093772" description="Translation initiation factor IF-2">
    <location>
        <begin position="1"/>
        <end position="896"/>
    </location>
</feature>
<feature type="domain" description="tr-type G">
    <location>
        <begin position="401"/>
        <end position="570"/>
    </location>
</feature>
<feature type="region of interest" description="Disordered" evidence="3">
    <location>
        <begin position="32"/>
        <end position="99"/>
    </location>
</feature>
<feature type="region of interest" description="Disordered" evidence="3">
    <location>
        <begin position="117"/>
        <end position="304"/>
    </location>
</feature>
<feature type="region of interest" description="G1" evidence="1">
    <location>
        <begin position="410"/>
        <end position="417"/>
    </location>
</feature>
<feature type="region of interest" description="G2" evidence="1">
    <location>
        <begin position="435"/>
        <end position="439"/>
    </location>
</feature>
<feature type="region of interest" description="G3" evidence="1">
    <location>
        <begin position="456"/>
        <end position="459"/>
    </location>
</feature>
<feature type="region of interest" description="G4" evidence="1">
    <location>
        <begin position="510"/>
        <end position="513"/>
    </location>
</feature>
<feature type="region of interest" description="G5" evidence="1">
    <location>
        <begin position="546"/>
        <end position="548"/>
    </location>
</feature>
<feature type="compositionally biased region" description="Polar residues" evidence="3">
    <location>
        <begin position="35"/>
        <end position="48"/>
    </location>
</feature>
<feature type="compositionally biased region" description="Basic and acidic residues" evidence="3">
    <location>
        <begin position="153"/>
        <end position="169"/>
    </location>
</feature>
<feature type="compositionally biased region" description="Low complexity" evidence="3">
    <location>
        <begin position="203"/>
        <end position="214"/>
    </location>
</feature>
<feature type="compositionally biased region" description="Polar residues" evidence="3">
    <location>
        <begin position="215"/>
        <end position="227"/>
    </location>
</feature>
<feature type="compositionally biased region" description="Low complexity" evidence="3">
    <location>
        <begin position="228"/>
        <end position="241"/>
    </location>
</feature>
<feature type="compositionally biased region" description="Basic and acidic residues" evidence="3">
    <location>
        <begin position="256"/>
        <end position="280"/>
    </location>
</feature>
<feature type="binding site" evidence="2">
    <location>
        <begin position="410"/>
        <end position="417"/>
    </location>
    <ligand>
        <name>GTP</name>
        <dbReference type="ChEBI" id="CHEBI:37565"/>
    </ligand>
</feature>
<feature type="binding site" evidence="2">
    <location>
        <begin position="456"/>
        <end position="460"/>
    </location>
    <ligand>
        <name>GTP</name>
        <dbReference type="ChEBI" id="CHEBI:37565"/>
    </ligand>
</feature>
<feature type="binding site" evidence="2">
    <location>
        <begin position="510"/>
        <end position="513"/>
    </location>
    <ligand>
        <name>GTP</name>
        <dbReference type="ChEBI" id="CHEBI:37565"/>
    </ligand>
</feature>